<reference key="1">
    <citation type="journal article" date="2010" name="Appl. Environ. Microbiol.">
        <title>The genome sequence of Psychrobacter arcticus 273-4, a psychroactive Siberian permafrost bacterium, reveals mechanisms for adaptation to low-temperature growth.</title>
        <authorList>
            <person name="Ayala-del-Rio H.L."/>
            <person name="Chain P.S."/>
            <person name="Grzymski J.J."/>
            <person name="Ponder M.A."/>
            <person name="Ivanova N."/>
            <person name="Bergholz P.W."/>
            <person name="Di Bartolo G."/>
            <person name="Hauser L."/>
            <person name="Land M."/>
            <person name="Bakermans C."/>
            <person name="Rodrigues D."/>
            <person name="Klappenbach J."/>
            <person name="Zarka D."/>
            <person name="Larimer F."/>
            <person name="Richardson P."/>
            <person name="Murray A."/>
            <person name="Thomashow M."/>
            <person name="Tiedje J.M."/>
        </authorList>
    </citation>
    <scope>NUCLEOTIDE SEQUENCE [LARGE SCALE GENOMIC DNA]</scope>
    <source>
        <strain>DSM 17307 / VKM B-2377 / 273-4</strain>
    </source>
</reference>
<feature type="chain" id="PRO_0000374956" description="Ribosomal protein uS12 methylthiotransferase RimO">
    <location>
        <begin position="1"/>
        <end position="525"/>
    </location>
</feature>
<feature type="domain" description="MTTase N-terminal" evidence="1">
    <location>
        <begin position="82"/>
        <end position="192"/>
    </location>
</feature>
<feature type="domain" description="Radical SAM core" evidence="2">
    <location>
        <begin position="216"/>
        <end position="453"/>
    </location>
</feature>
<feature type="domain" description="TRAM" evidence="1">
    <location>
        <begin position="456"/>
        <end position="525"/>
    </location>
</feature>
<feature type="region of interest" description="Disordered" evidence="3">
    <location>
        <begin position="1"/>
        <end position="44"/>
    </location>
</feature>
<feature type="compositionally biased region" description="Polar residues" evidence="3">
    <location>
        <begin position="1"/>
        <end position="20"/>
    </location>
</feature>
<feature type="binding site" evidence="1">
    <location>
        <position position="91"/>
    </location>
    <ligand>
        <name>[4Fe-4S] cluster</name>
        <dbReference type="ChEBI" id="CHEBI:49883"/>
        <label>1</label>
    </ligand>
</feature>
<feature type="binding site" evidence="1">
    <location>
        <position position="127"/>
    </location>
    <ligand>
        <name>[4Fe-4S] cluster</name>
        <dbReference type="ChEBI" id="CHEBI:49883"/>
        <label>1</label>
    </ligand>
</feature>
<feature type="binding site" evidence="1">
    <location>
        <position position="156"/>
    </location>
    <ligand>
        <name>[4Fe-4S] cluster</name>
        <dbReference type="ChEBI" id="CHEBI:49883"/>
        <label>1</label>
    </ligand>
</feature>
<feature type="binding site" evidence="1">
    <location>
        <position position="230"/>
    </location>
    <ligand>
        <name>[4Fe-4S] cluster</name>
        <dbReference type="ChEBI" id="CHEBI:49883"/>
        <label>2</label>
        <note>4Fe-4S-S-AdoMet</note>
    </ligand>
</feature>
<feature type="binding site" evidence="1">
    <location>
        <position position="234"/>
    </location>
    <ligand>
        <name>[4Fe-4S] cluster</name>
        <dbReference type="ChEBI" id="CHEBI:49883"/>
        <label>2</label>
        <note>4Fe-4S-S-AdoMet</note>
    </ligand>
</feature>
<feature type="binding site" evidence="1">
    <location>
        <position position="237"/>
    </location>
    <ligand>
        <name>[4Fe-4S] cluster</name>
        <dbReference type="ChEBI" id="CHEBI:49883"/>
        <label>2</label>
        <note>4Fe-4S-S-AdoMet</note>
    </ligand>
</feature>
<proteinExistence type="inferred from homology"/>
<keyword id="KW-0004">4Fe-4S</keyword>
<keyword id="KW-0963">Cytoplasm</keyword>
<keyword id="KW-0408">Iron</keyword>
<keyword id="KW-0411">Iron-sulfur</keyword>
<keyword id="KW-0479">Metal-binding</keyword>
<keyword id="KW-1185">Reference proteome</keyword>
<keyword id="KW-0949">S-adenosyl-L-methionine</keyword>
<keyword id="KW-0808">Transferase</keyword>
<protein>
    <recommendedName>
        <fullName evidence="1">Ribosomal protein uS12 methylthiotransferase RimO</fullName>
        <shortName evidence="1">uS12 MTTase</shortName>
        <shortName evidence="1">uS12 methylthiotransferase</shortName>
        <ecNumber evidence="1">2.8.4.4</ecNumber>
    </recommendedName>
    <alternativeName>
        <fullName evidence="1">Ribosomal protein uS12 (aspartate-C(3))-methylthiotransferase</fullName>
    </alternativeName>
    <alternativeName>
        <fullName evidence="1">Ribosome maturation factor RimO</fullName>
    </alternativeName>
</protein>
<gene>
    <name evidence="1" type="primary">rimO</name>
    <name type="ordered locus">Psyc_1536</name>
</gene>
<evidence type="ECO:0000255" key="1">
    <source>
        <dbReference type="HAMAP-Rule" id="MF_01865"/>
    </source>
</evidence>
<evidence type="ECO:0000255" key="2">
    <source>
        <dbReference type="PROSITE-ProRule" id="PRU01266"/>
    </source>
</evidence>
<evidence type="ECO:0000256" key="3">
    <source>
        <dbReference type="SAM" id="MobiDB-lite"/>
    </source>
</evidence>
<dbReference type="EC" id="2.8.4.4" evidence="1"/>
<dbReference type="EMBL" id="CP000082">
    <property type="protein sequence ID" value="AAZ19384.1"/>
    <property type="molecule type" value="Genomic_DNA"/>
</dbReference>
<dbReference type="RefSeq" id="WP_011280801.1">
    <property type="nucleotide sequence ID" value="NC_007204.1"/>
</dbReference>
<dbReference type="SMR" id="Q4FRH4"/>
<dbReference type="STRING" id="259536.Psyc_1536"/>
<dbReference type="KEGG" id="par:Psyc_1536"/>
<dbReference type="eggNOG" id="COG0621">
    <property type="taxonomic scope" value="Bacteria"/>
</dbReference>
<dbReference type="HOGENOM" id="CLU_018697_0_0_6"/>
<dbReference type="OrthoDB" id="9805215at2"/>
<dbReference type="Proteomes" id="UP000000546">
    <property type="component" value="Chromosome"/>
</dbReference>
<dbReference type="GO" id="GO:0005829">
    <property type="term" value="C:cytosol"/>
    <property type="evidence" value="ECO:0007669"/>
    <property type="project" value="TreeGrafter"/>
</dbReference>
<dbReference type="GO" id="GO:0051539">
    <property type="term" value="F:4 iron, 4 sulfur cluster binding"/>
    <property type="evidence" value="ECO:0007669"/>
    <property type="project" value="UniProtKB-UniRule"/>
</dbReference>
<dbReference type="GO" id="GO:0035599">
    <property type="term" value="F:aspartic acid methylthiotransferase activity"/>
    <property type="evidence" value="ECO:0007669"/>
    <property type="project" value="TreeGrafter"/>
</dbReference>
<dbReference type="GO" id="GO:0046872">
    <property type="term" value="F:metal ion binding"/>
    <property type="evidence" value="ECO:0007669"/>
    <property type="project" value="UniProtKB-KW"/>
</dbReference>
<dbReference type="GO" id="GO:0103039">
    <property type="term" value="F:protein methylthiotransferase activity"/>
    <property type="evidence" value="ECO:0007669"/>
    <property type="project" value="UniProtKB-EC"/>
</dbReference>
<dbReference type="GO" id="GO:0006400">
    <property type="term" value="P:tRNA modification"/>
    <property type="evidence" value="ECO:0007669"/>
    <property type="project" value="InterPro"/>
</dbReference>
<dbReference type="CDD" id="cd01335">
    <property type="entry name" value="Radical_SAM"/>
    <property type="match status" value="1"/>
</dbReference>
<dbReference type="FunFam" id="3.40.50.12160:FF:000002">
    <property type="entry name" value="Ribosomal protein S12 methylthiotransferase RimO"/>
    <property type="match status" value="1"/>
</dbReference>
<dbReference type="FunFam" id="3.80.30.20:FF:000001">
    <property type="entry name" value="tRNA-2-methylthio-N(6)-dimethylallyladenosine synthase 2"/>
    <property type="match status" value="1"/>
</dbReference>
<dbReference type="Gene3D" id="3.40.50.12160">
    <property type="entry name" value="Methylthiotransferase, N-terminal domain"/>
    <property type="match status" value="1"/>
</dbReference>
<dbReference type="Gene3D" id="2.40.50.140">
    <property type="entry name" value="Nucleic acid-binding proteins"/>
    <property type="match status" value="1"/>
</dbReference>
<dbReference type="Gene3D" id="3.80.30.20">
    <property type="entry name" value="tm_1862 like domain"/>
    <property type="match status" value="1"/>
</dbReference>
<dbReference type="HAMAP" id="MF_01865">
    <property type="entry name" value="MTTase_RimO"/>
    <property type="match status" value="1"/>
</dbReference>
<dbReference type="InterPro" id="IPR006638">
    <property type="entry name" value="Elp3/MiaA/NifB-like_rSAM"/>
</dbReference>
<dbReference type="InterPro" id="IPR005839">
    <property type="entry name" value="Methylthiotransferase"/>
</dbReference>
<dbReference type="InterPro" id="IPR020612">
    <property type="entry name" value="Methylthiotransferase_CS"/>
</dbReference>
<dbReference type="InterPro" id="IPR013848">
    <property type="entry name" value="Methylthiotransferase_N"/>
</dbReference>
<dbReference type="InterPro" id="IPR038135">
    <property type="entry name" value="Methylthiotransferase_N_sf"/>
</dbReference>
<dbReference type="InterPro" id="IPR012340">
    <property type="entry name" value="NA-bd_OB-fold"/>
</dbReference>
<dbReference type="InterPro" id="IPR005840">
    <property type="entry name" value="Ribosomal_uS12_MeSTrfase_RimO"/>
</dbReference>
<dbReference type="InterPro" id="IPR007197">
    <property type="entry name" value="rSAM"/>
</dbReference>
<dbReference type="InterPro" id="IPR023404">
    <property type="entry name" value="rSAM_horseshoe"/>
</dbReference>
<dbReference type="InterPro" id="IPR002792">
    <property type="entry name" value="TRAM_dom"/>
</dbReference>
<dbReference type="NCBIfam" id="TIGR01125">
    <property type="entry name" value="30S ribosomal protein S12 methylthiotransferase RimO"/>
    <property type="match status" value="1"/>
</dbReference>
<dbReference type="NCBIfam" id="TIGR00089">
    <property type="entry name" value="MiaB/RimO family radical SAM methylthiotransferase"/>
    <property type="match status" value="1"/>
</dbReference>
<dbReference type="PANTHER" id="PTHR43837">
    <property type="entry name" value="RIBOSOMAL PROTEIN S12 METHYLTHIOTRANSFERASE RIMO"/>
    <property type="match status" value="1"/>
</dbReference>
<dbReference type="PANTHER" id="PTHR43837:SF1">
    <property type="entry name" value="RIBOSOMAL PROTEIN US12 METHYLTHIOTRANSFERASE RIMO"/>
    <property type="match status" value="1"/>
</dbReference>
<dbReference type="Pfam" id="PF04055">
    <property type="entry name" value="Radical_SAM"/>
    <property type="match status" value="1"/>
</dbReference>
<dbReference type="Pfam" id="PF18693">
    <property type="entry name" value="TRAM_2"/>
    <property type="match status" value="1"/>
</dbReference>
<dbReference type="Pfam" id="PF00919">
    <property type="entry name" value="UPF0004"/>
    <property type="match status" value="1"/>
</dbReference>
<dbReference type="SFLD" id="SFLDG01082">
    <property type="entry name" value="B12-binding_domain_containing"/>
    <property type="match status" value="1"/>
</dbReference>
<dbReference type="SFLD" id="SFLDS00029">
    <property type="entry name" value="Radical_SAM"/>
    <property type="match status" value="1"/>
</dbReference>
<dbReference type="SFLD" id="SFLDF00274">
    <property type="entry name" value="ribosomal_protein_S12_methylth"/>
    <property type="match status" value="1"/>
</dbReference>
<dbReference type="SMART" id="SM00729">
    <property type="entry name" value="Elp3"/>
    <property type="match status" value="1"/>
</dbReference>
<dbReference type="SUPFAM" id="SSF102114">
    <property type="entry name" value="Radical SAM enzymes"/>
    <property type="match status" value="1"/>
</dbReference>
<dbReference type="PROSITE" id="PS51449">
    <property type="entry name" value="MTTASE_N"/>
    <property type="match status" value="1"/>
</dbReference>
<dbReference type="PROSITE" id="PS01278">
    <property type="entry name" value="MTTASE_RADICAL"/>
    <property type="match status" value="1"/>
</dbReference>
<dbReference type="PROSITE" id="PS51918">
    <property type="entry name" value="RADICAL_SAM"/>
    <property type="match status" value="1"/>
</dbReference>
<dbReference type="PROSITE" id="PS50926">
    <property type="entry name" value="TRAM"/>
    <property type="match status" value="1"/>
</dbReference>
<accession>Q4FRH4</accession>
<organism>
    <name type="scientific">Psychrobacter arcticus (strain DSM 17307 / VKM B-2377 / 273-4)</name>
    <dbReference type="NCBI Taxonomy" id="259536"/>
    <lineage>
        <taxon>Bacteria</taxon>
        <taxon>Pseudomonadati</taxon>
        <taxon>Pseudomonadota</taxon>
        <taxon>Gammaproteobacteria</taxon>
        <taxon>Moraxellales</taxon>
        <taxon>Moraxellaceae</taxon>
        <taxon>Psychrobacter</taxon>
    </lineage>
</organism>
<name>RIMO_PSYA2</name>
<comment type="function">
    <text evidence="1">Catalyzes the methylthiolation of an aspartic acid residue of ribosomal protein uS12.</text>
</comment>
<comment type="catalytic activity">
    <reaction evidence="1">
        <text>L-aspartate(89)-[ribosomal protein uS12]-hydrogen + (sulfur carrier)-SH + AH2 + 2 S-adenosyl-L-methionine = 3-methylsulfanyl-L-aspartate(89)-[ribosomal protein uS12]-hydrogen + (sulfur carrier)-H + 5'-deoxyadenosine + L-methionine + A + S-adenosyl-L-homocysteine + 2 H(+)</text>
        <dbReference type="Rhea" id="RHEA:37087"/>
        <dbReference type="Rhea" id="RHEA-COMP:10460"/>
        <dbReference type="Rhea" id="RHEA-COMP:10461"/>
        <dbReference type="Rhea" id="RHEA-COMP:14737"/>
        <dbReference type="Rhea" id="RHEA-COMP:14739"/>
        <dbReference type="ChEBI" id="CHEBI:13193"/>
        <dbReference type="ChEBI" id="CHEBI:15378"/>
        <dbReference type="ChEBI" id="CHEBI:17319"/>
        <dbReference type="ChEBI" id="CHEBI:17499"/>
        <dbReference type="ChEBI" id="CHEBI:29917"/>
        <dbReference type="ChEBI" id="CHEBI:29961"/>
        <dbReference type="ChEBI" id="CHEBI:57844"/>
        <dbReference type="ChEBI" id="CHEBI:57856"/>
        <dbReference type="ChEBI" id="CHEBI:59789"/>
        <dbReference type="ChEBI" id="CHEBI:64428"/>
        <dbReference type="ChEBI" id="CHEBI:73599"/>
        <dbReference type="EC" id="2.8.4.4"/>
    </reaction>
</comment>
<comment type="cofactor">
    <cofactor evidence="1">
        <name>[4Fe-4S] cluster</name>
        <dbReference type="ChEBI" id="CHEBI:49883"/>
    </cofactor>
    <text evidence="1">Binds 2 [4Fe-4S] clusters. One cluster is coordinated with 3 cysteines and an exchangeable S-adenosyl-L-methionine.</text>
</comment>
<comment type="subcellular location">
    <subcellularLocation>
        <location evidence="1">Cytoplasm</location>
    </subcellularLocation>
</comment>
<comment type="similarity">
    <text evidence="1">Belongs to the methylthiotransferase family. RimO subfamily.</text>
</comment>
<sequence>MPKISTESVNTTIAPSQPASTAPKDTATLFNPAKPTATPAQSSIDSVQPYHHKANHNQNRSIAQSGDATSSATASSSVTAAPKIGFVSLGCPKALVDSERIITELSRDGYQVASDYDGADLVVVNTCGFIESAVQESLDAIGEAISKNGKVIVTGCLGKEADKIREMHPAVLAVTGAHAYDEVIRAVALHVPKPDRSLDASYDPKIDLINEAGIKLTPSHYAYLKISEGCNHRCTFCIIPSLRGDLVSRPIDSVMNEALALKKAGVKELLIISQDTSAYGLDLKYKTSFWNGMPLKSKFYDLCQALNDLGIWVRLHYVYPYPHVDKVVELMGEKKLLPYLDIPFQHASHRILKAMKRPAHSENTLARIHAWREICPDIVIRSTFVVGFPGETEEDFQCLLDWLVEARLDRVGAFTYSEVEGAVANDLPNHVPEDVKQERYERLMTLQQDISAQKLQEKIGKTLMVLVDEIDREEGVAICRSYADAPEIDGHVYVDDIDAHVKVGQFLTVTIDDASEYDLFASYQA</sequence>